<feature type="signal peptide" evidence="3">
    <location>
        <begin position="1"/>
        <end position="23"/>
    </location>
</feature>
<feature type="chain" id="PRO_0000323720" description="LRR receptor-like serine/threonine-protein kinase FLS2">
    <location>
        <begin position="24"/>
        <end position="1173"/>
    </location>
</feature>
<feature type="topological domain" description="Extracellular" evidence="3">
    <location>
        <begin position="24"/>
        <end position="806"/>
    </location>
</feature>
<feature type="transmembrane region" description="Helical" evidence="3">
    <location>
        <begin position="807"/>
        <end position="827"/>
    </location>
</feature>
<feature type="topological domain" description="Cytoplasmic" evidence="3">
    <location>
        <begin position="828"/>
        <end position="1173"/>
    </location>
</feature>
<feature type="repeat" description="LRR 1">
    <location>
        <begin position="97"/>
        <end position="119"/>
    </location>
</feature>
<feature type="repeat" description="LRR 2">
    <location>
        <begin position="121"/>
        <end position="143"/>
    </location>
</feature>
<feature type="repeat" description="LRR 3">
    <location>
        <begin position="145"/>
        <end position="167"/>
    </location>
</feature>
<feature type="repeat" description="LRR 4">
    <location>
        <begin position="169"/>
        <end position="192"/>
    </location>
</feature>
<feature type="repeat" description="LRR 5">
    <location>
        <begin position="193"/>
        <end position="215"/>
    </location>
</feature>
<feature type="repeat" description="LRR 6">
    <location>
        <begin position="217"/>
        <end position="240"/>
    </location>
</feature>
<feature type="repeat" description="LRR 7">
    <location>
        <begin position="241"/>
        <end position="263"/>
    </location>
</feature>
<feature type="repeat" description="LRR 8">
    <location>
        <begin position="265"/>
        <end position="288"/>
    </location>
</feature>
<feature type="repeat" description="LRR 9">
    <location>
        <begin position="289"/>
        <end position="311"/>
    </location>
</feature>
<feature type="repeat" description="LRR 10">
    <location>
        <begin position="313"/>
        <end position="335"/>
    </location>
</feature>
<feature type="repeat" description="LRR 11">
    <location>
        <begin position="337"/>
        <end position="359"/>
    </location>
</feature>
<feature type="repeat" description="LRR 12">
    <location>
        <begin position="361"/>
        <end position="383"/>
    </location>
</feature>
<feature type="repeat" description="LRR 13">
    <location>
        <begin position="385"/>
        <end position="407"/>
    </location>
</feature>
<feature type="repeat" description="LRR 14">
    <location>
        <begin position="409"/>
        <end position="431"/>
    </location>
</feature>
<feature type="repeat" description="LRR 15">
    <location>
        <begin position="432"/>
        <end position="454"/>
    </location>
</feature>
<feature type="repeat" description="LRR 16">
    <location>
        <begin position="456"/>
        <end position="478"/>
    </location>
</feature>
<feature type="repeat" description="LRR 17">
    <location>
        <begin position="480"/>
        <end position="503"/>
    </location>
</feature>
<feature type="repeat" description="LRR 18">
    <location>
        <begin position="504"/>
        <end position="527"/>
    </location>
</feature>
<feature type="repeat" description="LRR 19">
    <location>
        <begin position="528"/>
        <end position="550"/>
    </location>
</feature>
<feature type="repeat" description="LRR 20">
    <location>
        <begin position="552"/>
        <end position="574"/>
    </location>
</feature>
<feature type="repeat" description="LRR 21">
    <location>
        <begin position="576"/>
        <end position="599"/>
    </location>
</feature>
<feature type="repeat" description="LRR 22">
    <location>
        <begin position="600"/>
        <end position="621"/>
    </location>
</feature>
<feature type="repeat" description="LRR 23">
    <location>
        <begin position="627"/>
        <end position="649"/>
    </location>
</feature>
<feature type="repeat" description="LRR 24">
    <location>
        <begin position="650"/>
        <end position="673"/>
    </location>
</feature>
<feature type="repeat" description="LRR 25">
    <location>
        <begin position="674"/>
        <end position="696"/>
    </location>
</feature>
<feature type="repeat" description="LRR 26">
    <location>
        <begin position="699"/>
        <end position="721"/>
    </location>
</feature>
<feature type="repeat" description="LRR 27">
    <location>
        <begin position="723"/>
        <end position="746"/>
    </location>
</feature>
<feature type="repeat" description="LRR 28">
    <location>
        <begin position="747"/>
        <end position="769"/>
    </location>
</feature>
<feature type="domain" description="Protein kinase" evidence="4">
    <location>
        <begin position="870"/>
        <end position="1155"/>
    </location>
</feature>
<feature type="active site" description="Proton acceptor" evidence="4 5">
    <location>
        <position position="997"/>
    </location>
</feature>
<feature type="binding site" evidence="4">
    <location>
        <begin position="876"/>
        <end position="884"/>
    </location>
    <ligand>
        <name>ATP</name>
        <dbReference type="ChEBI" id="CHEBI:30616"/>
    </ligand>
</feature>
<feature type="binding site" evidence="4">
    <location>
        <position position="898"/>
    </location>
    <ligand>
        <name>ATP</name>
        <dbReference type="ChEBI" id="CHEBI:30616"/>
    </ligand>
</feature>
<feature type="site" description="Interacts with flagellin flg22" evidence="24">
    <location>
        <position position="148"/>
    </location>
</feature>
<feature type="site" description="Interacts with flagellin flg22" evidence="24">
    <location>
        <position position="152"/>
    </location>
</feature>
<feature type="site" description="Interacts with flagellin flg22" evidence="24">
    <location>
        <position position="272"/>
    </location>
</feature>
<feature type="site" description="Interacts with flagellin flg22" evidence="24">
    <location>
        <position position="296"/>
    </location>
</feature>
<feature type="modified residue" description="Phosphothreonine" evidence="34">
    <location>
        <position position="867"/>
    </location>
</feature>
<feature type="modified residue" description="Phosphoserine; by BAK1" evidence="23">
    <location>
        <position position="869"/>
    </location>
</feature>
<feature type="modified residue" description="Phosphoserine; by BAK1" evidence="23">
    <location>
        <position position="906"/>
    </location>
</feature>
<feature type="modified residue" description="Phosphoserine" evidence="23">
    <location>
        <position position="938"/>
    </location>
</feature>
<feature type="modified residue" description="Phosphothreonine" evidence="23">
    <location>
        <position position="941"/>
    </location>
</feature>
<feature type="modified residue" description="Phosphoserine; by BAK1" evidence="23">
    <location>
        <position position="961"/>
    </location>
</feature>
<feature type="modified residue" description="Phosphotyrosine" evidence="1">
    <location>
        <position position="984"/>
    </location>
</feature>
<feature type="modified residue" description="Phosphoserine" evidence="2">
    <location>
        <position position="1035"/>
    </location>
</feature>
<feature type="modified residue" description="Phosphotyrosine" evidence="1">
    <location>
        <position position="1043"/>
    </location>
</feature>
<feature type="modified residue" description="Phosphotyrosine" evidence="2">
    <location>
        <position position="1050"/>
    </location>
</feature>
<feature type="modified residue" description="Phosphoserine" evidence="23">
    <location>
        <position position="1084"/>
    </location>
</feature>
<feature type="modified residue" description="Phosphoserine; by BAK1" evidence="23">
    <location>
        <position position="1115"/>
    </location>
</feature>
<feature type="glycosylation site" description="N-linked (GlcNAc...) asparagine" evidence="3">
    <location>
        <position position="62"/>
    </location>
</feature>
<feature type="glycosylation site" description="N-linked (GlcNAc...) asparagine" evidence="24 37">
    <location>
        <position position="94"/>
    </location>
</feature>
<feature type="glycosylation site" description="N-linked (GlcNAc...) asparagine" evidence="3">
    <location>
        <position position="179"/>
    </location>
</feature>
<feature type="glycosylation site" description="N-linked (GlcNAc...) asparagine" evidence="24 37">
    <location>
        <position position="217"/>
    </location>
</feature>
<feature type="glycosylation site" description="N-linked (GlcNAc...) asparagine" evidence="24 37">
    <location>
        <position position="262"/>
    </location>
</feature>
<feature type="glycosylation site" description="N-linked (GlcNAc...) asparagine" evidence="3">
    <location>
        <position position="347"/>
    </location>
</feature>
<feature type="glycosylation site" description="N-linked (GlcNAc...) asparagine" evidence="24 38">
    <location>
        <position position="361"/>
    </location>
</feature>
<feature type="glycosylation site" description="N-linked (GlcNAc...) asparagine" evidence="24 37">
    <location>
        <position position="371"/>
    </location>
</feature>
<feature type="glycosylation site" description="N-linked (GlcNAc...) asparagine" evidence="24 37 38">
    <location>
        <position position="388"/>
    </location>
</feature>
<feature type="glycosylation site" description="N-linked (GlcNAc...) asparagine" evidence="24 37">
    <location>
        <position position="406"/>
    </location>
</feature>
<feature type="glycosylation site" description="N-linked (GlcNAc...) asparagine" evidence="24 38">
    <location>
        <position position="432"/>
    </location>
</feature>
<feature type="glycosylation site" description="N-linked (GlcNAc...) asparagine" evidence="3">
    <location>
        <position position="453"/>
    </location>
</feature>
<feature type="glycosylation site" description="N-linked (GlcNAc...) asparagine" evidence="3">
    <location>
        <position position="466"/>
    </location>
</feature>
<feature type="glycosylation site" description="N-linked (GlcNAc...) asparagine" evidence="3">
    <location>
        <position position="525"/>
    </location>
</feature>
<feature type="glycosylation site" description="N-linked (GlcNAc...) asparagine" evidence="24 37">
    <location>
        <position position="588"/>
    </location>
</feature>
<feature type="glycosylation site" description="N-linked (GlcNAc...) asparagine" evidence="24 38">
    <location>
        <position position="631"/>
    </location>
</feature>
<feature type="glycosylation site" description="N-linked (GlcNAc...) asparagine" evidence="3">
    <location>
        <position position="684"/>
    </location>
</feature>
<feature type="glycosylation site" description="N-linked (GlcNAc...) asparagine" evidence="24 37 38">
    <location>
        <position position="704"/>
    </location>
</feature>
<feature type="glycosylation site" description="N-linked (GlcNAc...) asparagine" evidence="3">
    <location>
        <position position="720"/>
    </location>
</feature>
<feature type="glycosylation site" description="N-linked (GlcNAc...) asparagine" evidence="3">
    <location>
        <position position="733"/>
    </location>
</feature>
<feature type="glycosylation site" description="N-linked (GlcNAc...) asparagine" evidence="3">
    <location>
        <position position="744"/>
    </location>
</feature>
<feature type="glycosylation site" description="N-linked (GlcNAc...) asparagine" evidence="3">
    <location>
        <position position="772"/>
    </location>
</feature>
<feature type="disulfide bond" evidence="24">
    <location>
        <begin position="61"/>
        <end position="68"/>
    </location>
</feature>
<feature type="disulfide bond" evidence="24">
    <location>
        <begin position="165"/>
        <end position="187"/>
    </location>
</feature>
<feature type="mutagenesis site" description="Abolishes flagellin-binding." evidence="24">
    <original>R</original>
    <variation>A</variation>
    <location>
        <position position="294"/>
    </location>
</feature>
<feature type="mutagenesis site" description="Abolishes flagellin-binding." evidence="24">
    <original>H</original>
    <variation>A</variation>
    <location>
        <position position="316"/>
    </location>
</feature>
<feature type="mutagenesis site" description="In fls2-24; abolishes flagellin-binding." evidence="7 24">
    <original>G</original>
    <variation>R</variation>
    <location>
        <position position="318"/>
    </location>
</feature>
<feature type="mutagenesis site" description="Abolishes flagellin-binding." evidence="24">
    <original>T</original>
    <variation>Y</variation>
    <location>
        <position position="342"/>
    </location>
</feature>
<feature type="mutagenesis site" description="No effect on flagellin-binding." evidence="24">
    <original>T</original>
    <variation>Y</variation>
    <location>
        <position position="434"/>
    </location>
</feature>
<feature type="mutagenesis site" description="Abolishes flagellin-dependent signaling and reduces ligand-receptor internalization.">
    <original>T</original>
    <variation>V</variation>
    <location>
        <position position="867"/>
    </location>
</feature>
<feature type="mutagenesis site" description="Loss of binding with avrPto." evidence="15">
    <original>K</original>
    <variation>H</variation>
    <location>
        <position position="898"/>
    </location>
</feature>
<feature type="mutagenesis site" description="Abolishes flagellin-dependent signaling.">
    <original>T</original>
    <variation>A</variation>
    <location>
        <position position="1040"/>
    </location>
</feature>
<feature type="mutagenesis site" description="In fls2-17; abolishes kinase activity and strongly reduces flagellin-binding." evidence="7">
    <original>G</original>
    <variation>R</variation>
    <location>
        <position position="1064"/>
    </location>
</feature>
<feature type="sequence conflict" description="In Ref. 3; AAO41929." evidence="33" ref="3">
    <original>Q</original>
    <variation>K</variation>
    <location>
        <position position="652"/>
    </location>
</feature>
<feature type="helix" evidence="39">
    <location>
        <begin position="28"/>
        <end position="38"/>
    </location>
</feature>
<feature type="helix" evidence="39">
    <location>
        <begin position="50"/>
        <end position="55"/>
    </location>
</feature>
<feature type="helix" evidence="39">
    <location>
        <begin position="60"/>
        <end position="62"/>
    </location>
</feature>
<feature type="strand" evidence="39">
    <location>
        <begin position="66"/>
        <end position="68"/>
    </location>
</feature>
<feature type="strand" evidence="39">
    <location>
        <begin position="74"/>
        <end position="78"/>
    </location>
</feature>
<feature type="strand" evidence="39">
    <location>
        <begin position="85"/>
        <end position="87"/>
    </location>
</feature>
<feature type="helix" evidence="39">
    <location>
        <begin position="90"/>
        <end position="94"/>
    </location>
</feature>
<feature type="strand" evidence="39">
    <location>
        <begin position="100"/>
        <end position="102"/>
    </location>
</feature>
<feature type="strand" evidence="39">
    <location>
        <begin position="109"/>
        <end position="111"/>
    </location>
</feature>
<feature type="helix" evidence="39">
    <location>
        <begin position="114"/>
        <end position="118"/>
    </location>
</feature>
<feature type="strand" evidence="39">
    <location>
        <begin position="124"/>
        <end position="126"/>
    </location>
</feature>
<feature type="strand" evidence="39">
    <location>
        <begin position="133"/>
        <end position="135"/>
    </location>
</feature>
<feature type="helix" evidence="39">
    <location>
        <begin position="138"/>
        <end position="142"/>
    </location>
</feature>
<feature type="strand" evidence="39">
    <location>
        <begin position="148"/>
        <end position="150"/>
    </location>
</feature>
<feature type="strand" evidence="39">
    <location>
        <begin position="157"/>
        <end position="159"/>
    </location>
</feature>
<feature type="helix" evidence="39">
    <location>
        <begin position="162"/>
        <end position="166"/>
    </location>
</feature>
<feature type="strand" evidence="39">
    <location>
        <begin position="172"/>
        <end position="174"/>
    </location>
</feature>
<feature type="strand" evidence="39">
    <location>
        <begin position="181"/>
        <end position="183"/>
    </location>
</feature>
<feature type="helix" evidence="39">
    <location>
        <begin position="188"/>
        <end position="190"/>
    </location>
</feature>
<feature type="strand" evidence="39">
    <location>
        <begin position="195"/>
        <end position="198"/>
    </location>
</feature>
<feature type="strand" evidence="39">
    <location>
        <begin position="205"/>
        <end position="207"/>
    </location>
</feature>
<feature type="helix" evidence="39">
    <location>
        <begin position="210"/>
        <end position="214"/>
    </location>
</feature>
<feature type="strand" evidence="39">
    <location>
        <begin position="220"/>
        <end position="222"/>
    </location>
</feature>
<feature type="helix" evidence="39">
    <location>
        <begin position="234"/>
        <end position="238"/>
    </location>
</feature>
<feature type="strand" evidence="39">
    <location>
        <begin position="244"/>
        <end position="246"/>
    </location>
</feature>
<feature type="helix" evidence="39">
    <location>
        <begin position="258"/>
        <end position="262"/>
    </location>
</feature>
<feature type="strand" evidence="39">
    <location>
        <begin position="267"/>
        <end position="270"/>
    </location>
</feature>
<feature type="strand" evidence="39">
    <location>
        <begin position="277"/>
        <end position="279"/>
    </location>
</feature>
<feature type="helix" evidence="39">
    <location>
        <begin position="282"/>
        <end position="286"/>
    </location>
</feature>
<feature type="strand" evidence="39">
    <location>
        <begin position="292"/>
        <end position="294"/>
    </location>
</feature>
<feature type="strand" evidence="39">
    <location>
        <begin position="301"/>
        <end position="303"/>
    </location>
</feature>
<feature type="helix" evidence="39">
    <location>
        <begin position="306"/>
        <end position="310"/>
    </location>
</feature>
<feature type="strand" evidence="39">
    <location>
        <begin position="315"/>
        <end position="318"/>
    </location>
</feature>
<feature type="helix" evidence="39">
    <location>
        <begin position="330"/>
        <end position="334"/>
    </location>
</feature>
<feature type="strand" evidence="39">
    <location>
        <begin position="340"/>
        <end position="342"/>
    </location>
</feature>
<feature type="helix" evidence="39">
    <location>
        <begin position="354"/>
        <end position="358"/>
    </location>
</feature>
<feature type="strand" evidence="39">
    <location>
        <begin position="364"/>
        <end position="366"/>
    </location>
</feature>
<feature type="helix" evidence="39">
    <location>
        <begin position="380"/>
        <end position="382"/>
    </location>
</feature>
<feature type="strand" evidence="39">
    <location>
        <begin position="388"/>
        <end position="390"/>
    </location>
</feature>
<feature type="strand" evidence="39">
    <location>
        <begin position="393"/>
        <end position="396"/>
    </location>
</feature>
<feature type="helix" evidence="39">
    <location>
        <begin position="402"/>
        <end position="406"/>
    </location>
</feature>
<feature type="strand" evidence="39">
    <location>
        <begin position="412"/>
        <end position="414"/>
    </location>
</feature>
<feature type="turn" evidence="39">
    <location>
        <begin position="428"/>
        <end position="431"/>
    </location>
</feature>
<feature type="strand" evidence="39">
    <location>
        <begin position="434"/>
        <end position="437"/>
    </location>
</feature>
<feature type="helix" evidence="39">
    <location>
        <begin position="449"/>
        <end position="453"/>
    </location>
</feature>
<feature type="strand" evidence="39">
    <location>
        <begin position="459"/>
        <end position="461"/>
    </location>
</feature>
<feature type="helix" evidence="39">
    <location>
        <begin position="473"/>
        <end position="477"/>
    </location>
</feature>
<feature type="strand" evidence="39">
    <location>
        <begin position="482"/>
        <end position="485"/>
    </location>
</feature>
<feature type="helix" evidence="39">
    <location>
        <begin position="497"/>
        <end position="502"/>
    </location>
</feature>
<feature type="strand" evidence="39">
    <location>
        <begin position="507"/>
        <end position="509"/>
    </location>
</feature>
<feature type="strand" evidence="39">
    <location>
        <begin position="512"/>
        <end position="518"/>
    </location>
</feature>
<feature type="helix" evidence="39">
    <location>
        <begin position="521"/>
        <end position="525"/>
    </location>
</feature>
<feature type="strand" evidence="39">
    <location>
        <begin position="531"/>
        <end position="533"/>
    </location>
</feature>
<feature type="strand" evidence="39">
    <location>
        <begin position="536"/>
        <end position="541"/>
    </location>
</feature>
<feature type="helix" evidence="39">
    <location>
        <begin position="545"/>
        <end position="549"/>
    </location>
</feature>
<feature type="strand" evidence="39">
    <location>
        <begin position="555"/>
        <end position="557"/>
    </location>
</feature>
<feature type="strand" evidence="39">
    <location>
        <begin position="564"/>
        <end position="566"/>
    </location>
</feature>
<feature type="helix" evidence="39">
    <location>
        <begin position="569"/>
        <end position="573"/>
    </location>
</feature>
<feature type="strand" evidence="39">
    <location>
        <begin position="578"/>
        <end position="581"/>
    </location>
</feature>
<feature type="strand" evidence="39">
    <location>
        <begin position="584"/>
        <end position="590"/>
    </location>
</feature>
<feature type="helix" evidence="39">
    <location>
        <begin position="593"/>
        <end position="597"/>
    </location>
</feature>
<feature type="strand" evidence="39">
    <location>
        <begin position="602"/>
        <end position="605"/>
    </location>
</feature>
<feature type="helix" evidence="39">
    <location>
        <begin position="617"/>
        <end position="622"/>
    </location>
</feature>
<feature type="strand" evidence="39">
    <location>
        <begin position="628"/>
        <end position="631"/>
    </location>
</feature>
<feature type="helix" evidence="39">
    <location>
        <begin position="643"/>
        <end position="645"/>
    </location>
</feature>
<feature type="strand" evidence="39">
    <location>
        <begin position="653"/>
        <end position="655"/>
    </location>
</feature>
<feature type="strand" evidence="39">
    <location>
        <begin position="658"/>
        <end position="661"/>
    </location>
</feature>
<feature type="helix" evidence="39">
    <location>
        <begin position="667"/>
        <end position="671"/>
    </location>
</feature>
<feature type="strand" evidence="39">
    <location>
        <begin position="677"/>
        <end position="679"/>
    </location>
</feature>
<feature type="helix" evidence="39">
    <location>
        <begin position="691"/>
        <end position="696"/>
    </location>
</feature>
<feature type="strand" evidence="39">
    <location>
        <begin position="701"/>
        <end position="704"/>
    </location>
</feature>
<feature type="helix" evidence="39">
    <location>
        <begin position="716"/>
        <end position="720"/>
    </location>
</feature>
<feature type="strand" evidence="39">
    <location>
        <begin position="726"/>
        <end position="728"/>
    </location>
</feature>
<feature type="helix" evidence="39">
    <location>
        <begin position="741"/>
        <end position="744"/>
    </location>
</feature>
<feature type="strand" evidence="39">
    <location>
        <begin position="750"/>
        <end position="752"/>
    </location>
</feature>
<feature type="helix" evidence="39">
    <location>
        <begin position="773"/>
        <end position="776"/>
    </location>
</feature>
<keyword id="KW-0002">3D-structure</keyword>
<keyword id="KW-0067">ATP-binding</keyword>
<keyword id="KW-1003">Cell membrane</keyword>
<keyword id="KW-1015">Disulfide bond</keyword>
<keyword id="KW-0967">Endosome</keyword>
<keyword id="KW-0325">Glycoprotein</keyword>
<keyword id="KW-0418">Kinase</keyword>
<keyword id="KW-0433">Leucine-rich repeat</keyword>
<keyword id="KW-0472">Membrane</keyword>
<keyword id="KW-0547">Nucleotide-binding</keyword>
<keyword id="KW-0597">Phosphoprotein</keyword>
<keyword id="KW-0611">Plant defense</keyword>
<keyword id="KW-0675">Receptor</keyword>
<keyword id="KW-1185">Reference proteome</keyword>
<keyword id="KW-0677">Repeat</keyword>
<keyword id="KW-0723">Serine/threonine-protein kinase</keyword>
<keyword id="KW-0732">Signal</keyword>
<keyword id="KW-0808">Transferase</keyword>
<keyword id="KW-0812">Transmembrane</keyword>
<keyword id="KW-1133">Transmembrane helix</keyword>
<keyword id="KW-0832">Ubl conjugation</keyword>
<keyword id="KW-0833">Ubl conjugation pathway</keyword>
<reference key="1">
    <citation type="journal article" date="1998" name="DNA Res.">
        <title>Structural analysis of Arabidopsis thaliana chromosome 5. V. Sequence features of the regions of 1,381,565 bp covered by twenty one physically assigned P1 and TAC clones.</title>
        <authorList>
            <person name="Kaneko T."/>
            <person name="Kotani H."/>
            <person name="Nakamura Y."/>
            <person name="Sato S."/>
            <person name="Asamizu E."/>
            <person name="Miyajima N."/>
            <person name="Tabata S."/>
        </authorList>
    </citation>
    <scope>NUCLEOTIDE SEQUENCE [LARGE SCALE GENOMIC DNA]</scope>
    <source>
        <strain>cv. Columbia</strain>
    </source>
</reference>
<reference key="2">
    <citation type="journal article" date="2017" name="Plant J.">
        <title>Araport11: a complete reannotation of the Arabidopsis thaliana reference genome.</title>
        <authorList>
            <person name="Cheng C.Y."/>
            <person name="Krishnakumar V."/>
            <person name="Chan A.P."/>
            <person name="Thibaud-Nissen F."/>
            <person name="Schobel S."/>
            <person name="Town C.D."/>
        </authorList>
    </citation>
    <scope>GENOME REANNOTATION</scope>
    <source>
        <strain>cv. Columbia</strain>
    </source>
</reference>
<reference key="3">
    <citation type="journal article" date="2003" name="Science">
        <title>Empirical analysis of transcriptional activity in the Arabidopsis genome.</title>
        <authorList>
            <person name="Yamada K."/>
            <person name="Lim J."/>
            <person name="Dale J.M."/>
            <person name="Chen H."/>
            <person name="Shinn P."/>
            <person name="Palm C.J."/>
            <person name="Southwick A.M."/>
            <person name="Wu H.C."/>
            <person name="Kim C.J."/>
            <person name="Nguyen M."/>
            <person name="Pham P.K."/>
            <person name="Cheuk R.F."/>
            <person name="Karlin-Newmann G."/>
            <person name="Liu S.X."/>
            <person name="Lam B."/>
            <person name="Sakano H."/>
            <person name="Wu T."/>
            <person name="Yu G."/>
            <person name="Miranda M."/>
            <person name="Quach H.L."/>
            <person name="Tripp M."/>
            <person name="Chang C.H."/>
            <person name="Lee J.M."/>
            <person name="Toriumi M.J."/>
            <person name="Chan M.M."/>
            <person name="Tang C.C."/>
            <person name="Onodera C.S."/>
            <person name="Deng J.M."/>
            <person name="Akiyama K."/>
            <person name="Ansari Y."/>
            <person name="Arakawa T."/>
            <person name="Banh J."/>
            <person name="Banno F."/>
            <person name="Bowser L."/>
            <person name="Brooks S.Y."/>
            <person name="Carninci P."/>
            <person name="Chao Q."/>
            <person name="Choy N."/>
            <person name="Enju A."/>
            <person name="Goldsmith A.D."/>
            <person name="Gurjal M."/>
            <person name="Hansen N.F."/>
            <person name="Hayashizaki Y."/>
            <person name="Johnson-Hopson C."/>
            <person name="Hsuan V.W."/>
            <person name="Iida K."/>
            <person name="Karnes M."/>
            <person name="Khan S."/>
            <person name="Koesema E."/>
            <person name="Ishida J."/>
            <person name="Jiang P.X."/>
            <person name="Jones T."/>
            <person name="Kawai J."/>
            <person name="Kamiya A."/>
            <person name="Meyers C."/>
            <person name="Nakajima M."/>
            <person name="Narusaka M."/>
            <person name="Seki M."/>
            <person name="Sakurai T."/>
            <person name="Satou M."/>
            <person name="Tamse R."/>
            <person name="Vaysberg M."/>
            <person name="Wallender E.K."/>
            <person name="Wong C."/>
            <person name="Yamamura Y."/>
            <person name="Yuan S."/>
            <person name="Shinozaki K."/>
            <person name="Davis R.W."/>
            <person name="Theologis A."/>
            <person name="Ecker J.R."/>
        </authorList>
    </citation>
    <scope>NUCLEOTIDE SEQUENCE [LARGE SCALE MRNA]</scope>
    <source>
        <strain>cv. Columbia</strain>
    </source>
</reference>
<reference key="4">
    <citation type="submission" date="2006-07" db="EMBL/GenBank/DDBJ databases">
        <title>Large-scale analysis of RIKEN Arabidopsis full-length (RAFL) cDNAs.</title>
        <authorList>
            <person name="Totoki Y."/>
            <person name="Seki M."/>
            <person name="Ishida J."/>
            <person name="Nakajima M."/>
            <person name="Enju A."/>
            <person name="Kamiya A."/>
            <person name="Narusaka M."/>
            <person name="Shin-i T."/>
            <person name="Nakagawa M."/>
            <person name="Sakamoto N."/>
            <person name="Oishi K."/>
            <person name="Kohara Y."/>
            <person name="Kobayashi M."/>
            <person name="Toyoda A."/>
            <person name="Sakaki Y."/>
            <person name="Sakurai T."/>
            <person name="Iida K."/>
            <person name="Akiyama K."/>
            <person name="Satou M."/>
            <person name="Toyoda T."/>
            <person name="Konagaya A."/>
            <person name="Carninci P."/>
            <person name="Kawai J."/>
            <person name="Hayashizaki Y."/>
            <person name="Shinozaki K."/>
        </authorList>
    </citation>
    <scope>NUCLEOTIDE SEQUENCE [LARGE SCALE MRNA] OF 1-831</scope>
    <source>
        <strain>cv. Columbia</strain>
    </source>
</reference>
<reference key="5">
    <citation type="journal article" date="2000" name="Mol. Cell">
        <title>FLS2: an LRR receptor-like kinase involved in the perception of the bacterial elicitor flagellin in Arabidopsis.</title>
        <authorList>
            <person name="Gomez-Gomez L."/>
            <person name="Boller T."/>
        </authorList>
    </citation>
    <scope>FUNCTION</scope>
    <scope>TISSUE SPECIFICITY</scope>
</reference>
<reference key="6">
    <citation type="journal article" date="2001" name="J. Biol. Chem.">
        <title>Sensitivity of different ecotypes and mutants of Arabidopsis thaliana toward the bacterial elicitor flagellin correlates with the presence of receptor-binding sites.</title>
        <authorList>
            <person name="Bauer Z."/>
            <person name="Gomez-Gomez L."/>
            <person name="Boller T."/>
            <person name="Felix G."/>
        </authorList>
    </citation>
    <scope>BINDING TO FLAGELLIN</scope>
</reference>
<reference key="7">
    <citation type="journal article" date="2001" name="Plant Cell">
        <title>Both the extracellular leucine-rich repeat domain and the kinase activity of FSL2 are required for flagellin binding and signaling in Arabidopsis.</title>
        <authorList>
            <person name="Gomez-Gomez L."/>
            <person name="Bauer Z."/>
            <person name="Boller T."/>
        </authorList>
    </citation>
    <scope>FUNCTION</scope>
    <scope>MUTAGENESIS OF GLY-318 AND GLY-1064</scope>
    <scope>INTERACTION WITH KAPP</scope>
</reference>
<reference key="8">
    <citation type="journal article" date="2002" name="Nature">
        <title>MAP kinase signalling cascade in Arabidopsis innate immunity.</title>
        <authorList>
            <person name="Asai T."/>
            <person name="Tena G."/>
            <person name="Plotnikova J."/>
            <person name="Willmann M.R."/>
            <person name="Chiu W.-L."/>
            <person name="Gomez-Gomez L."/>
            <person name="Boller T."/>
            <person name="Ausubel F.M."/>
            <person name="Sheen J."/>
        </authorList>
    </citation>
    <scope>FUNCTION</scope>
</reference>
<reference key="9">
    <citation type="journal article" date="2002" name="Trends Plant Sci.">
        <title>Flagellin perception: a paradigm for innate immunity.</title>
        <authorList>
            <person name="Gomez-Gomez L."/>
            <person name="Boller T."/>
        </authorList>
    </citation>
    <scope>REVIEW</scope>
</reference>
<reference key="10">
    <citation type="journal article" date="2004" name="Nature">
        <title>Bacterial disease resistance in Arabidopsis through flagellin perception.</title>
        <authorList>
            <person name="Zipfel C."/>
            <person name="Robatzek S."/>
            <person name="Navarro L."/>
            <person name="Oakeley E.J."/>
            <person name="Jones J.D.G."/>
            <person name="Felix G."/>
            <person name="Boller T."/>
        </authorList>
    </citation>
    <scope>FUNCTION</scope>
</reference>
<reference key="11">
    <citation type="book" date="2004" name="Proceedings of the 15th international conference on Arabidopsis research">
        <title>Functional analysis and expression studies of the flagellin receptor FLS2.</title>
        <authorList>
            <person name="Robatzek S."/>
            <person name="Chinchilla D."/>
            <person name="Bauer Z."/>
            <person name="Zipfel C."/>
            <person name="Kunze G."/>
            <person name="Bittel P."/>
            <person name="Caniard A."/>
            <person name="Felix G."/>
            <person name="Boller T."/>
        </authorList>
    </citation>
    <scope>FUNCTION</scope>
    <scope>SUBCELLULAR LOCATION</scope>
</reference>
<reference key="12">
    <citation type="journal article" date="2006" name="Genes Dev.">
        <title>Ligand-induced endocytosis of the pattern recognition receptor FLS2 in Arabidopsis.</title>
        <authorList>
            <person name="Robatzek S."/>
            <person name="Chinchilla D."/>
            <person name="Boller T."/>
        </authorList>
    </citation>
    <scope>SUBCELLULAR LOCATION</scope>
</reference>
<reference key="13">
    <citation type="journal article" date="2006" name="Plant Cell">
        <title>The Arabidopsis receptor kinase FLS2 binds flg22 and determines the specificity of flagellin perception.</title>
        <authorList>
            <person name="Chinchilla D."/>
            <person name="Bauer Z."/>
            <person name="Regenass M."/>
            <person name="Boller T."/>
            <person name="Felix G."/>
        </authorList>
    </citation>
    <scope>FUNCTION</scope>
    <scope>BINDING TO FLAGELLIN</scope>
</reference>
<reference key="14">
    <citation type="journal article" date="2007" name="Nature">
        <title>A flagellin-induced complex of the receptor FLS2 and BAK1 initiates plant defence.</title>
        <authorList>
            <person name="Chinchilla D."/>
            <person name="Zipfel C."/>
            <person name="Robatzek S."/>
            <person name="Kemmerling B."/>
            <person name="Nuernberger T."/>
            <person name="Jones J.D.G."/>
            <person name="Felix G."/>
            <person name="Boller T."/>
        </authorList>
    </citation>
    <scope>SUBUNIT</scope>
</reference>
<reference key="15">
    <citation type="journal article" date="2007" name="Plant Cell">
        <title>Identification and mutational analysis of Arabidopsis FLS2 leucine-rich repeat domain residues that contribute to flagellin perception.</title>
        <authorList>
            <person name="Dunning F.M."/>
            <person name="Sun W."/>
            <person name="Jansen K.L."/>
            <person name="Helft L."/>
            <person name="Bent A.F."/>
        </authorList>
    </citation>
    <scope>DOMAIN</scope>
</reference>
<reference key="16">
    <citation type="journal article" date="2007" name="Plant Cell Physiol.">
        <title>Ligand-dependent reduction in the membrane mobility of FLAGELLIN SENSITIVE2, an arabidopsis receptor-like kinase.</title>
        <authorList>
            <person name="Ali G.S."/>
            <person name="Prasad K.V.S.K."/>
            <person name="Day I."/>
            <person name="Reddy A.S.N."/>
        </authorList>
    </citation>
    <scope>SUBCELLULAR LOCATION</scope>
    <scope>SUBUNIT</scope>
</reference>
<reference key="17">
    <citation type="journal article" date="2007" name="Proc. Natl. Acad. Sci. U.S.A.">
        <title>The receptor-like kinase SERK3/BAK1 is a central regulator of innate immunity in plants.</title>
        <authorList>
            <person name="Heese A."/>
            <person name="Hann D.R."/>
            <person name="Gimenez-Ibanez S."/>
            <person name="Jones A.M.E."/>
            <person name="He K."/>
            <person name="Li J."/>
            <person name="Schroeder J.I."/>
            <person name="Peck S.C."/>
            <person name="Rathjen J.P."/>
        </authorList>
    </citation>
    <scope>INTERACTION WITH BAK1</scope>
</reference>
<reference key="18">
    <citation type="journal article" date="2008" name="Curr. Biol.">
        <title>Pseudomonas syringae effector AvrPto blocks innate immunity by targeting receptor kinases.</title>
        <authorList>
            <person name="Xiang T."/>
            <person name="Zong N."/>
            <person name="Zou Y."/>
            <person name="Wu Y."/>
            <person name="Zhang J."/>
            <person name="Xing W."/>
            <person name="Li Y."/>
            <person name="Tang X."/>
            <person name="Zhu L."/>
            <person name="Chai J."/>
            <person name="Zhou J.-M."/>
        </authorList>
    </citation>
    <scope>INTERACTION WITH PSEUDOMONAS SYRINGAE AVRPTO1</scope>
    <scope>MUTAGENESIS OF LYS-898</scope>
    <scope>AUTOPHOSPHORYLATION</scope>
</reference>
<reference key="19">
    <citation type="journal article" date="2008" name="Curr. Biol.">
        <title>Plant pattern-recognition receptor FLS2 is directed for degradation by the bacterial ubiquitin ligase AvrPtoB.</title>
        <authorList>
            <person name="Goehre V."/>
            <person name="Spallek T."/>
            <person name="Haeweker H."/>
            <person name="Mersmann S."/>
            <person name="Mentzel T."/>
            <person name="Boller T."/>
            <person name="de Torres M."/>
            <person name="Mansfield J.W."/>
            <person name="Robatzek S."/>
        </authorList>
    </citation>
    <scope>UBIQUITINATION BY AVRPTOB</scope>
    <scope>INTERACTION WITH AVRPTOB</scope>
    <scope>REPRESSION BY PSEUDOMONAS SYRINGAE</scope>
    <scope>SUBCELLULAR LOCATION</scope>
</reference>
<reference key="20">
    <citation type="journal article" date="2010" name="Cell Host Microbe">
        <title>Receptor-like cytoplasmic kinases integrate signaling from multiple plant immune receptors and are targeted by a Pseudomonas syringae effector.</title>
        <authorList>
            <person name="Zhang J."/>
            <person name="Li W."/>
            <person name="Xiang T."/>
            <person name="Liu Z."/>
            <person name="Laluk K."/>
            <person name="Ding X."/>
            <person name="Zou Y."/>
            <person name="Gao M."/>
            <person name="Zhang X."/>
            <person name="Chen S."/>
            <person name="Mengiste T."/>
            <person name="Zhang Y."/>
            <person name="Zhou J.M."/>
        </authorList>
    </citation>
    <scope>INTERACTION WITH PBS1; BIK1; PBL1 AND PBL2</scope>
</reference>
<reference key="21">
    <citation type="journal article" date="2010" name="J. Biol. Chem.">
        <title>Rapid heteromerization and phosphorylation of ligand-activated plant transmembrane receptors and their associated kinase BAK1.</title>
        <authorList>
            <person name="Schulze B."/>
            <person name="Mentzel T."/>
            <person name="Jehle A.K."/>
            <person name="Mueller K."/>
            <person name="Beeler S."/>
            <person name="Boller T."/>
            <person name="Felix G."/>
            <person name="Chinchilla D."/>
        </authorList>
    </citation>
    <scope>INTERACTION WITH BAK1</scope>
    <scope>PHOSPHORYLATION AT THR-867</scope>
</reference>
<reference key="22">
    <citation type="journal article" date="2011" name="Mol. Plant Pathol.">
        <title>Physical association of pattern-triggered immunity (PTI) and effector-triggered immunity (ETI) immune receptors in Arabidopsis.</title>
        <authorList>
            <person name="Qi Y."/>
            <person name="Tsuda K."/>
            <person name="Glazebrook J."/>
            <person name="Katagiri F."/>
        </authorList>
    </citation>
    <scope>INTERACTION WITH BSK8</scope>
</reference>
<reference key="23">
    <citation type="journal article" date="2011" name="Plant Cell">
        <title>The Arabidopsis leucine-rich repeat receptor-like kinases BAK1/SERK3 and BKK1/SERK4 are required for innate immunity to hemibiotrophic and biotrophic pathogens.</title>
        <authorList>
            <person name="Roux M."/>
            <person name="Schwessinger B."/>
            <person name="Albrecht C."/>
            <person name="Chinchilla D."/>
            <person name="Jones A."/>
            <person name="Holton N."/>
            <person name="Malinovsky F.G."/>
            <person name="Tor M."/>
            <person name="de Vries S."/>
            <person name="Zipfel C."/>
        </authorList>
    </citation>
    <scope>INTERACTION WITH SERK3/BAK1; SERK4/BKK1; SERK1 AND SERK2</scope>
    <source>
        <strain>cv. Columbia</strain>
    </source>
</reference>
<reference key="24">
    <citation type="journal article" date="2012" name="Nat. Commun.">
        <title>CRT1 is a nuclear-translocated MORC endonuclease that participates in multiple levels of plant immunity.</title>
        <authorList>
            <person name="Kang H.-G."/>
            <person name="Hyong W.C."/>
            <person name="von Einem S."/>
            <person name="Manosalva P."/>
            <person name="Ehlers K."/>
            <person name="Liu P.-P."/>
            <person name="Buxa S.V."/>
            <person name="Moreau M."/>
            <person name="Mang H.-G."/>
            <person name="Kachroo P."/>
            <person name="Kogel K.-H."/>
            <person name="Klessig D.F."/>
        </authorList>
    </citation>
    <scope>INTERACTION WITH MORC1/CRT1</scope>
    <source>
        <strain>cv. Columbia</strain>
    </source>
</reference>
<reference key="25">
    <citation type="journal article" date="2013" name="Plant Cell">
        <title>BR-SIGNALING KINASE1 physically associates with FLAGELLIN SENSING2 and regulates plant innate immunity in Arabidopsis.</title>
        <authorList>
            <person name="Shi H."/>
            <person name="Shen Q."/>
            <person name="Qi Y."/>
            <person name="Yan H."/>
            <person name="Nie H."/>
            <person name="Chen Y."/>
            <person name="Zhao T."/>
            <person name="Katagiri F."/>
            <person name="Tang D."/>
        </authorList>
    </citation>
    <scope>INTERACTION WITH BSK1</scope>
</reference>
<reference key="26">
    <citation type="journal article" date="2013" name="Protein Cell">
        <title>Identification and functional analysis of phosphorylation residues of the Arabidopsis BOTRYTIS-INDUCED KINASE1.</title>
        <authorList>
            <person name="Xu J."/>
            <person name="Wei X."/>
            <person name="Yan L."/>
            <person name="Liu D."/>
            <person name="Ma Y."/>
            <person name="Guo Y."/>
            <person name="Peng C."/>
            <person name="Zhou H."/>
            <person name="Yang C."/>
            <person name="Lou Z."/>
            <person name="Shui W."/>
        </authorList>
    </citation>
    <scope>PHOSPHORYLATION AT SER-869; SER-906; SER-938; THR-941; SER-961; SER-1084 AND SER-1115</scope>
</reference>
<reference key="27">
    <citation type="journal article" date="2014" name="Cell Host Microbe">
        <title>The FLS2-associated kinase BIK1 directly phosphorylates the NADPH oxidase RbohD to control plant immunity.</title>
        <authorList>
            <person name="Li L."/>
            <person name="Li M."/>
            <person name="Yu L."/>
            <person name="Zhou Z."/>
            <person name="Liang X."/>
            <person name="Liu Z."/>
            <person name="Cai G."/>
            <person name="Gao L."/>
            <person name="Zhang X."/>
            <person name="Wang Y."/>
            <person name="Chen S."/>
            <person name="Zhou J.M."/>
        </authorList>
    </citation>
    <scope>INTERACTION WITH RBOHD</scope>
</reference>
<reference key="28">
    <citation type="journal article" date="2014" name="Mol. Plant">
        <title>Salicylic acid signaling controls the maturation and localization of the arabidopsis defense protein ACCELERATED CELL DEATH6.</title>
        <authorList>
            <person name="Zhang Z."/>
            <person name="Shrestha J."/>
            <person name="Tateda C."/>
            <person name="Greenberg J.T."/>
        </authorList>
    </citation>
    <scope>SUBCELLULAR LOCATION</scope>
    <scope>SUBUNIT</scope>
    <source>
        <strain>cv. Columbia</strain>
    </source>
</reference>
<reference key="29">
    <citation type="journal article" date="2014" name="Science">
        <title>A bacterial tyrosine phosphatase inhibits plant pattern recognition receptor activation.</title>
        <authorList>
            <person name="Macho A.P."/>
            <person name="Schwessinger B."/>
            <person name="Ntoukakis V."/>
            <person name="Brutus A."/>
            <person name="Segonzac C."/>
            <person name="Roy S."/>
            <person name="Kadota Y."/>
            <person name="Oh M.H."/>
            <person name="Sklenar J."/>
            <person name="Derbyshire P."/>
            <person name="Lozano-Duran R."/>
            <person name="Malinovsky F.G."/>
            <person name="Monaghan J."/>
            <person name="Menke F.L."/>
            <person name="Huber S.C."/>
            <person name="He S.Y."/>
            <person name="Zipfel C."/>
        </authorList>
    </citation>
    <scope>FUNCTION</scope>
    <scope>INTERACTION WITH HOPD2</scope>
</reference>
<reference key="30">
    <citation type="journal article" date="2016" name="Plant Cell">
        <title>The Arabidopsis malectin-like/LRR-RLK IOS1 is critical for BAK1-dependent and BAK1-independent pattern-triggered immunity.</title>
        <authorList>
            <person name="Yeh Y.-H."/>
            <person name="Panzeri D."/>
            <person name="Kadota Y."/>
            <person name="Huang Y.-C."/>
            <person name="Huang P.-Y."/>
            <person name="Tao C.-N."/>
            <person name="Roux M."/>
            <person name="Chien H.-C."/>
            <person name="Chin T.-C."/>
            <person name="Chu P.-W."/>
            <person name="Zipfel C."/>
            <person name="Zimmerli L."/>
        </authorList>
    </citation>
    <scope>INTERACTION WITH IOS1</scope>
</reference>
<reference key="31">
    <citation type="journal article" date="2016" name="Plant Physiol.">
        <title>Two redundant receptor-like cytoplasmic kinases function downstream of pattern recognition receptors to regulate activation of SA biosynthesis.</title>
        <authorList>
            <person name="Kong Q."/>
            <person name="Sun T."/>
            <person name="Qu N."/>
            <person name="Ma J."/>
            <person name="Li M."/>
            <person name="Cheng Y.T."/>
            <person name="Zhang Q."/>
            <person name="Wu D."/>
            <person name="Zhang Z."/>
            <person name="Zhang Y."/>
        </authorList>
    </citation>
    <scope>INTERACTION WITH PCRK1 AND PCRK2</scope>
</reference>
<reference key="32">
    <citation type="journal article" date="2020" name="Nature">
        <title>Ligand-induced monoubiquitination of BIK1 regulates plant immunity.</title>
        <authorList>
            <person name="Ma X."/>
            <person name="Claus L.A.N."/>
            <person name="Leslie M.E."/>
            <person name="Tao K."/>
            <person name="Wu Z."/>
            <person name="Liu J."/>
            <person name="Yu X."/>
            <person name="Li B."/>
            <person name="Zhou J."/>
            <person name="Savatin D.V."/>
            <person name="Peng J."/>
            <person name="Tyler B.M."/>
            <person name="Heese A."/>
            <person name="Russinova E."/>
            <person name="He P."/>
            <person name="Shan L."/>
        </authorList>
    </citation>
    <scope>DISRUPTION PHENOTYPE</scope>
    <scope>SUBCELLULAR LOCATION</scope>
    <scope>INTERACTION WITH SERK3/BAK1</scope>
</reference>
<reference key="33">
    <citation type="journal article" date="2013" name="Science">
        <title>Structural basis for flg22-induced activation of the Arabidopsis FLS2-BAK1 immune complex.</title>
        <authorList>
            <person name="Sun Y."/>
            <person name="Li L."/>
            <person name="Macho A.P."/>
            <person name="Han Z."/>
            <person name="Hu Z."/>
            <person name="Zipfel C."/>
            <person name="Zhou J.M."/>
            <person name="Chai J."/>
        </authorList>
    </citation>
    <scope>X-RAY CRYSTALLOGRAPHY (3.06 ANGSTROMS) OF 25-800 IN COMPLEX WITH BAK1 AND FLG22</scope>
    <scope>DISULFIDE BONDS</scope>
    <scope>GLYCOSYLATION AT ASN-94; ASN-217; ASN-262; ASN-361; ASN-371; ASN-388; ASN-406; ASN-432; ASN-588; ASN-631 AND ASN-704</scope>
    <scope>SUBUNIT</scope>
    <scope>MUTAGENESIS OF ARG-294; HIS-316; GLY-318; THR-342 AND THR-434</scope>
</reference>
<proteinExistence type="evidence at protein level"/>
<sequence length="1173" mass="128824">MKLLSKTFLILTLTFFFFGIALAKQSFEPEIEALKSFKNGISNDPLGVLSDWTIIGSLRHCNWTGITCDSTGHVVSVSLLEKQLEGVLSPAIANLTYLQVLDLTSNSFTGKIPAEIGKLTELNQLILYLNYFSGSIPSGIWELKNIFYLDLRNNLLSGDVPEEICKTSSLVLIGFDYNNLTGKIPECLGDLVHLQMFVAAGNHLTGSIPVSIGTLANLTDLDLSGNQLTGKIPRDFGNLLNLQSLVLTENLLEGDIPAEIGNCSSLVQLELYDNQLTGKIPAELGNLVQLQALRIYKNKLTSSIPSSLFRLTQLTHLGLSENHLVGPISEEIGFLESLEVLTLHSNNFTGEFPQSITNLRNLTVLTVGFNNISGELPADLGLLTNLRNLSAHDNLLTGPIPSSISNCTGLKLLDLSHNQMTGEIPRGFGRMNLTFISIGRNHFTGEIPDDIFNCSNLETLSVADNNLTGTLKPLIGKLQKLRILQVSYNSLTGPIPREIGNLKDLNILYLHSNGFTGRIPREMSNLTLLQGLRMYSNDLEGPIPEEMFDMKLLSVLDLSNNKFSGQIPALFSKLESLTYLSLQGNKFNGSIPASLKSLSLLNTFDISDNLLTGTIPGELLASLKNMQLYLNFSNNLLTGTIPKELGKLEMVQEIDLSNNLFSGSIPRSLQACKNVFTLDFSQNNLSGHIPDEVFQGMDMIISLNLSRNSFSGEIPQSFGNMTHLVSLDLSSNNLTGEIPESLANLSTLKHLKLASNNLKGHVPESGVFKNINASDLMGNTDLCGSKKPLKPCTIKQKSSHFSKRTRVILIILGSAAALLLVLLLVLILTCCKKKEKKIENSSESSLPDLDSALKLKRFEPKELEQATDSFNSANIIGSSSLSTVYKGQLEDGTVIAVKVLNLKEFSAESDKWFYTEAKTLSQLKHRNLVKILGFAWESGKTKALVLPFMENGNLEDTIHGSAAPIGSLLEKIDLCVHIASGIDYLHSGYGFPIVHCDLKPANILLDSDRVAHVSDFGTARILGFREDGSTTASTSAFEGTIGYLAPEFAYMRKVTTKADVFSFGIIMMELMTKQRPTSLNDEDSQDMTLRQLVEKSIGNGRKGMVRVLDMELGDSIVSLKQEEAIEDFLKLCLFCTSSRPEDRPDMNEILTHLMKLRGKANSFREDRNEDREV</sequence>
<evidence type="ECO:0000250" key="1">
    <source>
        <dbReference type="UniProtKB" id="C0LGT6"/>
    </source>
</evidence>
<evidence type="ECO:0000250" key="2">
    <source>
        <dbReference type="UniProtKB" id="Q9M0G7"/>
    </source>
</evidence>
<evidence type="ECO:0000255" key="3"/>
<evidence type="ECO:0000255" key="4">
    <source>
        <dbReference type="PROSITE-ProRule" id="PRU00159"/>
    </source>
</evidence>
<evidence type="ECO:0000255" key="5">
    <source>
        <dbReference type="PROSITE-ProRule" id="PRU10027"/>
    </source>
</evidence>
<evidence type="ECO:0000269" key="6">
    <source>
    </source>
</evidence>
<evidence type="ECO:0000269" key="7">
    <source>
    </source>
</evidence>
<evidence type="ECO:0000269" key="8">
    <source>
    </source>
</evidence>
<evidence type="ECO:0000269" key="9">
    <source>
    </source>
</evidence>
<evidence type="ECO:0000269" key="10">
    <source>
    </source>
</evidence>
<evidence type="ECO:0000269" key="11">
    <source>
    </source>
</evidence>
<evidence type="ECO:0000269" key="12">
    <source>
    </source>
</evidence>
<evidence type="ECO:0000269" key="13">
    <source>
    </source>
</evidence>
<evidence type="ECO:0000269" key="14">
    <source>
    </source>
</evidence>
<evidence type="ECO:0000269" key="15">
    <source>
    </source>
</evidence>
<evidence type="ECO:0000269" key="16">
    <source>
    </source>
</evidence>
<evidence type="ECO:0000269" key="17">
    <source>
    </source>
</evidence>
<evidence type="ECO:0000269" key="18">
    <source>
    </source>
</evidence>
<evidence type="ECO:0000269" key="19">
    <source>
    </source>
</evidence>
<evidence type="ECO:0000269" key="20">
    <source>
    </source>
</evidence>
<evidence type="ECO:0000269" key="21">
    <source>
    </source>
</evidence>
<evidence type="ECO:0000269" key="22">
    <source>
    </source>
</evidence>
<evidence type="ECO:0000269" key="23">
    <source>
    </source>
</evidence>
<evidence type="ECO:0000269" key="24">
    <source>
    </source>
</evidence>
<evidence type="ECO:0000269" key="25">
    <source>
    </source>
</evidence>
<evidence type="ECO:0000269" key="26">
    <source>
    </source>
</evidence>
<evidence type="ECO:0000269" key="27">
    <source>
    </source>
</evidence>
<evidence type="ECO:0000269" key="28">
    <source>
    </source>
</evidence>
<evidence type="ECO:0000269" key="29">
    <source>
    </source>
</evidence>
<evidence type="ECO:0000269" key="30">
    <source>
    </source>
</evidence>
<evidence type="ECO:0000269" key="31">
    <source ref="11"/>
</evidence>
<evidence type="ECO:0000303" key="32">
    <source>
    </source>
</evidence>
<evidence type="ECO:0000305" key="33"/>
<evidence type="ECO:0000305" key="34">
    <source>
    </source>
</evidence>
<evidence type="ECO:0000312" key="35">
    <source>
        <dbReference type="Araport" id="AT5G46330"/>
    </source>
</evidence>
<evidence type="ECO:0000312" key="36">
    <source>
        <dbReference type="EMBL" id="BAB11088.1"/>
    </source>
</evidence>
<evidence type="ECO:0007744" key="37">
    <source>
        <dbReference type="PDB" id="4MN8"/>
    </source>
</evidence>
<evidence type="ECO:0007744" key="38">
    <source>
        <dbReference type="PDB" id="4MNA"/>
    </source>
</evidence>
<evidence type="ECO:0007829" key="39">
    <source>
        <dbReference type="PDB" id="4MN8"/>
    </source>
</evidence>
<protein>
    <recommendedName>
        <fullName>LRR receptor-like serine/threonine-protein kinase FLS2</fullName>
        <ecNumber>2.7.11.1</ecNumber>
    </recommendedName>
    <alternativeName>
        <fullName evidence="32">Protein FLAGELLIN-SENSING 2</fullName>
    </alternativeName>
    <alternativeName>
        <fullName evidence="32">Protein FLAGELLIN-SENSITIVE 2</fullName>
    </alternativeName>
</protein>
<comment type="function">
    <text evidence="6 7 8 9 10 25 31">Constitutes the pattern-recognition receptor (PPR) that determines the specific perception of flagellin (flg22), a potent elicitor of the defense response to pathogen-associated molecular patterns (PAMPs). Flagellin-binding to the receptor is the first step to initiate the innate immune MAP kinase signaling cascade (MEKK1, MKK4/MKK5 and MPK3/MPK6), resulting in enhanced resistance against pathogens. Binding to the effector AvrPto1 or to the phosphatase hopD2 from Pseudomonas syringae blocks the downstream plant immune response.</text>
</comment>
<comment type="catalytic activity">
    <reaction>
        <text>L-seryl-[protein] + ATP = O-phospho-L-seryl-[protein] + ADP + H(+)</text>
        <dbReference type="Rhea" id="RHEA:17989"/>
        <dbReference type="Rhea" id="RHEA-COMP:9863"/>
        <dbReference type="Rhea" id="RHEA-COMP:11604"/>
        <dbReference type="ChEBI" id="CHEBI:15378"/>
        <dbReference type="ChEBI" id="CHEBI:29999"/>
        <dbReference type="ChEBI" id="CHEBI:30616"/>
        <dbReference type="ChEBI" id="CHEBI:83421"/>
        <dbReference type="ChEBI" id="CHEBI:456216"/>
        <dbReference type="EC" id="2.7.11.1"/>
    </reaction>
</comment>
<comment type="catalytic activity">
    <reaction>
        <text>L-threonyl-[protein] + ATP = O-phospho-L-threonyl-[protein] + ADP + H(+)</text>
        <dbReference type="Rhea" id="RHEA:46608"/>
        <dbReference type="Rhea" id="RHEA-COMP:11060"/>
        <dbReference type="Rhea" id="RHEA-COMP:11605"/>
        <dbReference type="ChEBI" id="CHEBI:15378"/>
        <dbReference type="ChEBI" id="CHEBI:30013"/>
        <dbReference type="ChEBI" id="CHEBI:30616"/>
        <dbReference type="ChEBI" id="CHEBI:61977"/>
        <dbReference type="ChEBI" id="CHEBI:456216"/>
        <dbReference type="EC" id="2.7.11.1"/>
    </reaction>
</comment>
<comment type="subunit">
    <text evidence="7 11 12 13 15 16 17 18 19 20 21 22 24 25 26 27 28 29 30">Heterodimer with SERK3/BAK1 (PubMed:17626179, PubMed:20103591, PubMed:21693696, PubMed:24114786, PubMed:32404997). The activation by flagellin (flg22) induces the dissociation of the complex with SERK3/BAK1 (PubMed:20413097, PubMed:32404997). Interacts with KAPP. Does not form homodimer. Interacts with SERK3/BAK1, SERK4/BKK1, SERK1 and SERK2 in a specific ligand-induced manner. Interacts with P.syringae AvrPto1, AvrPtoB and (via the kinase and cytoplasmic domains) hopD2. Component of large complexes containing, at least, FLS2 and ACD6 in endoplasmic reticulum and plasma membrane (PubMed:24923602). Interacts with MORC1/CRT1 (PubMed:23250427). Interacts with PBS1, BIK1, PBL1 and PBL2 (PubMed:20413097). Interacts with RBOHD (PubMed:24629339). Binds to IOS1 which triggers FLS2-BAK1 complex formation upon microbe-associated molecular patterns (MAMPs) treatment (PubMed:27317676). Interacts with PCRK1 and PCRK2 (PubMed:27208222). Interacts with BSK1 (PubMed:23532072). Interaction with BSK8 (PubMed:21726371).</text>
</comment>
<comment type="interaction">
    <interactant intactId="EBI-1799448">
        <id>Q9FL28</id>
    </interactant>
    <interactant intactId="EBI-20664191">
        <id>Q9LFG1</id>
        <label>At3g53590</label>
    </interactant>
    <organismsDiffer>false</organismsDiffer>
    <experiments>3</experiments>
</comment>
<comment type="interaction">
    <interactant intactId="EBI-1799448">
        <id>Q9FL28</id>
    </interactant>
    <interactant intactId="EBI-617138">
        <id>Q94F62</id>
        <label>BAK1</label>
    </interactant>
    <organismsDiffer>false</organismsDiffer>
    <experiments>19</experiments>
</comment>
<comment type="interaction">
    <interactant intactId="EBI-1799448">
        <id>Q9FL28</id>
    </interactant>
    <interactant intactId="EBI-20653325">
        <id>O65440-2</id>
        <label>BAM3</label>
    </interactant>
    <organismsDiffer>false</organismsDiffer>
    <experiments>2</experiments>
</comment>
<comment type="interaction">
    <interactant intactId="EBI-1799448">
        <id>Q9FL28</id>
    </interactant>
    <interactant intactId="EBI-1238176">
        <id>O48814</id>
        <label>BIK1</label>
    </interactant>
    <organismsDiffer>false</organismsDiffer>
    <experiments>5</experiments>
</comment>
<comment type="interaction">
    <interactant intactId="EBI-1799448">
        <id>Q9FL28</id>
    </interactant>
    <interactant intactId="EBI-16940407">
        <id>Q42371</id>
        <label>ERECTA</label>
    </interactant>
    <organismsDiffer>false</organismsDiffer>
    <experiments>2</experiments>
</comment>
<comment type="interaction">
    <interactant intactId="EBI-1799448">
        <id>Q9FL28</id>
    </interactant>
    <interactant intactId="EBI-16895926">
        <id>Q6XAT2</id>
        <label>ERL2</label>
    </interactant>
    <organismsDiffer>false</organismsDiffer>
    <experiments>4</experiments>
</comment>
<comment type="interaction">
    <interactant intactId="EBI-1799448">
        <id>Q9FL28</id>
    </interactant>
    <interactant intactId="EBI-1799448">
        <id>Q9FL28</id>
        <label>FLS2</label>
    </interactant>
    <organismsDiffer>false</organismsDiffer>
    <experiments>3</experiments>
</comment>
<comment type="interaction">
    <interactant intactId="EBI-1799448">
        <id>Q9FL28</id>
    </interactant>
    <interactant intactId="EBI-16924837">
        <id>Q9C8I6</id>
        <label>IOS1</label>
    </interactant>
    <organismsDiffer>false</organismsDiffer>
    <experiments>2</experiments>
</comment>
<comment type="interaction">
    <interactant intactId="EBI-1799448">
        <id>Q9FL28</id>
    </interactant>
    <interactant intactId="EBI-16196224">
        <id>Q9M0G7</id>
        <label>MIK1</label>
    </interactant>
    <organismsDiffer>false</organismsDiffer>
    <experiments>3</experiments>
</comment>
<comment type="interaction">
    <interactant intactId="EBI-1799448">
        <id>Q9FL28</id>
    </interactant>
    <interactant intactId="EBI-16955556">
        <id>Q8GX94</id>
        <label>MQB2.1</label>
    </interactant>
    <organismsDiffer>false</organismsDiffer>
    <experiments>2</experiments>
</comment>
<comment type="interaction">
    <interactant intactId="EBI-1799448">
        <id>Q9FL28</id>
    </interactant>
    <interactant intactId="EBI-1393626">
        <id>Q03250</id>
        <label>RBG7</label>
    </interactant>
    <organismsDiffer>false</organismsDiffer>
    <experiments>4</experiments>
</comment>
<comment type="interaction">
    <interactant intactId="EBI-1799448">
        <id>Q9FL28</id>
    </interactant>
    <interactant intactId="EBI-16940204">
        <id>Q9S7I6</id>
        <label>RPK2</label>
    </interactant>
    <organismsDiffer>false</organismsDiffer>
    <experiments>2</experiments>
</comment>
<comment type="interaction">
    <interactant intactId="EBI-1799448">
        <id>Q9FL28</id>
    </interactant>
    <interactant intactId="EBI-16077660">
        <id>P21184</id>
        <label>fliC</label>
    </interactant>
    <organismsDiffer>true</organismsDiffer>
    <experiments>5</experiments>
</comment>
<comment type="subcellular location">
    <subcellularLocation>
        <location evidence="27 30">Cell membrane</location>
        <topology evidence="3">Single-pass type I membrane protein</topology>
    </subcellularLocation>
    <subcellularLocation>
        <location evidence="27 30">Endosome membrane</location>
        <topology evidence="3">Single-pass type I membrane protein</topology>
    </subcellularLocation>
    <text evidence="27 30">Internalization by endocytosis, especially in response to pathogen-associated molecular patterns (PAMPs e.g. flg22) recognition (PubMed:24923602, PubMed:32404997). Accumulates at the plasma membrane, in an ACD6-dependent manner, in response to salicylic acid (SA) signaling, thus priming defenses (PubMed:24923602).</text>
</comment>
<comment type="tissue specificity">
    <text evidence="6">Ubiquitously expressed.</text>
</comment>
<comment type="induction">
    <text evidence="16">Repressed upon infection with the P.syringae virulent DC3000 strain, in a flg22- and avrPtoB-dependent manner (at protein level).</text>
</comment>
<comment type="domain">
    <text evidence="14">Both extracellular leucine-rich repeats and protein kinase domains are required for flg22-binding. The LRR 9 to LRR 15 domains are involved in flg22-binding.</text>
</comment>
<comment type="PTM">
    <text evidence="17">Autophosphorylated. The phosphorylated form is essential in the perception of flagellin. Dephosphorylated by KAPP. Autophosphorylation is inhibited by the binding with avrPto1.</text>
</comment>
<comment type="PTM">
    <text evidence="16">Polyubiquitinated at the kinase domain mediated by P.syringae AvrPtoB.</text>
</comment>
<comment type="disruption phenotype">
    <text evidence="30">Impaired BIK1 pathogen-associated molecular patterns (PAMPs e.g. flg22)-induced ubiquitination.</text>
</comment>
<comment type="miscellaneous">
    <text>After flg22-binding, forms instantaneously a heteromeric complex with BAK1 and is transphosphorylated within 15 seconds. After activation, the receptor is internalized by endocytosis and subject to degradation.</text>
</comment>
<comment type="similarity">
    <text evidence="4">Belongs to the protein kinase superfamily. Ser/Thr protein kinase family.</text>
</comment>
<name>FLS2_ARATH</name>
<dbReference type="EC" id="2.7.11.1"/>
<dbReference type="EMBL" id="AB010698">
    <property type="protein sequence ID" value="BAB11088.1"/>
    <property type="molecule type" value="Genomic_DNA"/>
</dbReference>
<dbReference type="EMBL" id="CP002688">
    <property type="protein sequence ID" value="AED95370.1"/>
    <property type="molecule type" value="Genomic_DNA"/>
</dbReference>
<dbReference type="EMBL" id="CP002688">
    <property type="protein sequence ID" value="ANM68238.1"/>
    <property type="molecule type" value="Genomic_DNA"/>
</dbReference>
<dbReference type="EMBL" id="BT003880">
    <property type="protein sequence ID" value="AAO41929.1"/>
    <property type="molecule type" value="mRNA"/>
</dbReference>
<dbReference type="EMBL" id="AK226709">
    <property type="protein sequence ID" value="BAE98815.1"/>
    <property type="molecule type" value="mRNA"/>
</dbReference>
<dbReference type="RefSeq" id="NP_001330009.1">
    <property type="nucleotide sequence ID" value="NM_001344672.1"/>
</dbReference>
<dbReference type="RefSeq" id="NP_199445.1">
    <property type="nucleotide sequence ID" value="NM_124003.4"/>
</dbReference>
<dbReference type="PDB" id="4MN8">
    <property type="method" value="X-ray"/>
    <property type="resolution" value="3.06 A"/>
    <property type="chains" value="A=25-800"/>
</dbReference>
<dbReference type="PDB" id="4MNA">
    <property type="method" value="X-ray"/>
    <property type="resolution" value="4.00 A"/>
    <property type="chains" value="A=25-800"/>
</dbReference>
<dbReference type="PDBsum" id="4MN8"/>
<dbReference type="PDBsum" id="4MNA"/>
<dbReference type="SMR" id="Q9FL28"/>
<dbReference type="BioGRID" id="19925">
    <property type="interactions" value="54"/>
</dbReference>
<dbReference type="DIP" id="DIP-46004N"/>
<dbReference type="FunCoup" id="Q9FL28">
    <property type="interactions" value="387"/>
</dbReference>
<dbReference type="IntAct" id="Q9FL28">
    <property type="interactions" value="45"/>
</dbReference>
<dbReference type="MINT" id="Q9FL28"/>
<dbReference type="STRING" id="3702.Q9FL28"/>
<dbReference type="GlyCosmos" id="Q9FL28">
    <property type="glycosylation" value="22 sites, No reported glycans"/>
</dbReference>
<dbReference type="GlyGen" id="Q9FL28">
    <property type="glycosylation" value="26 sites"/>
</dbReference>
<dbReference type="iPTMnet" id="Q9FL28"/>
<dbReference type="SwissPalm" id="Q9FL28"/>
<dbReference type="PaxDb" id="3702-AT5G46330.1"/>
<dbReference type="ProteomicsDB" id="230627"/>
<dbReference type="DNASU" id="834676"/>
<dbReference type="EnsemblPlants" id="AT5G46330.1">
    <property type="protein sequence ID" value="AT5G46330.1"/>
    <property type="gene ID" value="AT5G46330"/>
</dbReference>
<dbReference type="EnsemblPlants" id="AT5G46330.2">
    <property type="protein sequence ID" value="AT5G46330.2"/>
    <property type="gene ID" value="AT5G46330"/>
</dbReference>
<dbReference type="GeneID" id="834676"/>
<dbReference type="Gramene" id="AT5G46330.1">
    <property type="protein sequence ID" value="AT5G46330.1"/>
    <property type="gene ID" value="AT5G46330"/>
</dbReference>
<dbReference type="Gramene" id="AT5G46330.2">
    <property type="protein sequence ID" value="AT5G46330.2"/>
    <property type="gene ID" value="AT5G46330"/>
</dbReference>
<dbReference type="KEGG" id="ath:AT5G46330"/>
<dbReference type="Araport" id="AT5G46330"/>
<dbReference type="TAIR" id="AT5G46330">
    <property type="gene designation" value="FLS2"/>
</dbReference>
<dbReference type="eggNOG" id="ENOG502QPYS">
    <property type="taxonomic scope" value="Eukaryota"/>
</dbReference>
<dbReference type="HOGENOM" id="CLU_000288_22_1_1"/>
<dbReference type="InParanoid" id="Q9FL28"/>
<dbReference type="OMA" id="ALPRHCN"/>
<dbReference type="PhylomeDB" id="Q9FL28"/>
<dbReference type="EvolutionaryTrace" id="Q9FL28"/>
<dbReference type="PRO" id="PR:Q9FL28"/>
<dbReference type="Proteomes" id="UP000006548">
    <property type="component" value="Chromosome 5"/>
</dbReference>
<dbReference type="ExpressionAtlas" id="Q9FL28">
    <property type="expression patterns" value="baseline and differential"/>
</dbReference>
<dbReference type="GO" id="GO:0012505">
    <property type="term" value="C:endomembrane system"/>
    <property type="evidence" value="ECO:0000314"/>
    <property type="project" value="UniProtKB"/>
</dbReference>
<dbReference type="GO" id="GO:0005768">
    <property type="term" value="C:endosome"/>
    <property type="evidence" value="ECO:0000314"/>
    <property type="project" value="UniProtKB"/>
</dbReference>
<dbReference type="GO" id="GO:0010008">
    <property type="term" value="C:endosome membrane"/>
    <property type="evidence" value="ECO:0007669"/>
    <property type="project" value="UniProtKB-SubCell"/>
</dbReference>
<dbReference type="GO" id="GO:0016020">
    <property type="term" value="C:membrane"/>
    <property type="evidence" value="ECO:0000314"/>
    <property type="project" value="TAIR"/>
</dbReference>
<dbReference type="GO" id="GO:0005886">
    <property type="term" value="C:plasma membrane"/>
    <property type="evidence" value="ECO:0000314"/>
    <property type="project" value="UniProtKB"/>
</dbReference>
<dbReference type="GO" id="GO:0005524">
    <property type="term" value="F:ATP binding"/>
    <property type="evidence" value="ECO:0007669"/>
    <property type="project" value="UniProtKB-KW"/>
</dbReference>
<dbReference type="GO" id="GO:0042802">
    <property type="term" value="F:identical protein binding"/>
    <property type="evidence" value="ECO:0000353"/>
    <property type="project" value="IntAct"/>
</dbReference>
<dbReference type="GO" id="GO:0106310">
    <property type="term" value="F:protein serine kinase activity"/>
    <property type="evidence" value="ECO:0007669"/>
    <property type="project" value="RHEA"/>
</dbReference>
<dbReference type="GO" id="GO:0004675">
    <property type="term" value="F:transmembrane receptor protein serine/threonine kinase activity"/>
    <property type="evidence" value="ECO:0000250"/>
    <property type="project" value="TAIR"/>
</dbReference>
<dbReference type="GO" id="GO:0052544">
    <property type="term" value="P:defense response by callose deposition in cell wall"/>
    <property type="evidence" value="ECO:0000315"/>
    <property type="project" value="TAIR"/>
</dbReference>
<dbReference type="GO" id="GO:0042742">
    <property type="term" value="P:defense response to bacterium"/>
    <property type="evidence" value="ECO:0000315"/>
    <property type="project" value="TAIR"/>
</dbReference>
<dbReference type="GO" id="GO:0016045">
    <property type="term" value="P:detection of bacterium"/>
    <property type="evidence" value="ECO:0000315"/>
    <property type="project" value="TAIR"/>
</dbReference>
<dbReference type="GO" id="GO:0006898">
    <property type="term" value="P:receptor-mediated endocytosis"/>
    <property type="evidence" value="ECO:0000314"/>
    <property type="project" value="TAIR"/>
</dbReference>
<dbReference type="GO" id="GO:0010359">
    <property type="term" value="P:regulation of anion channel activity"/>
    <property type="evidence" value="ECO:0000315"/>
    <property type="project" value="TAIR"/>
</dbReference>
<dbReference type="CDD" id="cd14066">
    <property type="entry name" value="STKc_IRAK"/>
    <property type="match status" value="1"/>
</dbReference>
<dbReference type="FunFam" id="3.80.10.10:FF:000221">
    <property type="entry name" value="Leucine-rich repeat receptor-like protein kinase PXL1"/>
    <property type="match status" value="1"/>
</dbReference>
<dbReference type="FunFam" id="1.10.510.10:FF:001387">
    <property type="entry name" value="LRR receptor-like serine/threonine-protein kinase FLS2"/>
    <property type="match status" value="1"/>
</dbReference>
<dbReference type="FunFam" id="3.30.200.20:FF:001009">
    <property type="entry name" value="LRR receptor-like serine/threonine-protein kinase FLS2"/>
    <property type="match status" value="1"/>
</dbReference>
<dbReference type="FunFam" id="3.80.10.10:FF:000676">
    <property type="entry name" value="LRR receptor-like serine/threonine-protein kinase FLS2"/>
    <property type="match status" value="1"/>
</dbReference>
<dbReference type="FunFam" id="3.80.10.10:FF:001169">
    <property type="entry name" value="LRR receptor-like serine/threonine-protein kinase FLS2"/>
    <property type="match status" value="1"/>
</dbReference>
<dbReference type="FunFam" id="3.80.10.10:FF:000095">
    <property type="entry name" value="LRR receptor-like serine/threonine-protein kinase GSO1"/>
    <property type="match status" value="1"/>
</dbReference>
<dbReference type="FunFam" id="3.80.10.10:FF:000683">
    <property type="entry name" value="LRR receptor-like serine/threonine-protein kinase GSO1"/>
    <property type="match status" value="1"/>
</dbReference>
<dbReference type="FunFam" id="3.80.10.10:FF:000470">
    <property type="entry name" value="LRR receptor-like serine/threonine-protein kinase RPK2"/>
    <property type="match status" value="1"/>
</dbReference>
<dbReference type="Gene3D" id="3.30.200.20">
    <property type="entry name" value="Phosphorylase Kinase, domain 1"/>
    <property type="match status" value="1"/>
</dbReference>
<dbReference type="Gene3D" id="3.80.10.10">
    <property type="entry name" value="Ribonuclease Inhibitor"/>
    <property type="match status" value="6"/>
</dbReference>
<dbReference type="Gene3D" id="1.10.510.10">
    <property type="entry name" value="Transferase(Phosphotransferase) domain 1"/>
    <property type="match status" value="1"/>
</dbReference>
<dbReference type="InterPro" id="IPR011009">
    <property type="entry name" value="Kinase-like_dom_sf"/>
</dbReference>
<dbReference type="InterPro" id="IPR001611">
    <property type="entry name" value="Leu-rich_rpt"/>
</dbReference>
<dbReference type="InterPro" id="IPR003591">
    <property type="entry name" value="Leu-rich_rpt_typical-subtyp"/>
</dbReference>
<dbReference type="InterPro" id="IPR032675">
    <property type="entry name" value="LRR_dom_sf"/>
</dbReference>
<dbReference type="InterPro" id="IPR013210">
    <property type="entry name" value="LRR_N_plant-typ"/>
</dbReference>
<dbReference type="InterPro" id="IPR055414">
    <property type="entry name" value="LRR_R13L4/SHOC2-like"/>
</dbReference>
<dbReference type="InterPro" id="IPR050647">
    <property type="entry name" value="Plant_LRR-RLKs"/>
</dbReference>
<dbReference type="InterPro" id="IPR000719">
    <property type="entry name" value="Prot_kinase_dom"/>
</dbReference>
<dbReference type="InterPro" id="IPR008271">
    <property type="entry name" value="Ser/Thr_kinase_AS"/>
</dbReference>
<dbReference type="PANTHER" id="PTHR48056">
    <property type="entry name" value="LRR RECEPTOR-LIKE SERINE/THREONINE-PROTEIN KINASE-RELATED"/>
    <property type="match status" value="1"/>
</dbReference>
<dbReference type="PANTHER" id="PTHR48056:SF83">
    <property type="entry name" value="LRR RECEPTOR-LIKE SERINE_THREONINE-PROTEIN KINASE FLS2"/>
    <property type="match status" value="1"/>
</dbReference>
<dbReference type="Pfam" id="PF00560">
    <property type="entry name" value="LRR_1"/>
    <property type="match status" value="10"/>
</dbReference>
<dbReference type="Pfam" id="PF23598">
    <property type="entry name" value="LRR_14"/>
    <property type="match status" value="1"/>
</dbReference>
<dbReference type="Pfam" id="PF13855">
    <property type="entry name" value="LRR_8"/>
    <property type="match status" value="2"/>
</dbReference>
<dbReference type="Pfam" id="PF08263">
    <property type="entry name" value="LRRNT_2"/>
    <property type="match status" value="1"/>
</dbReference>
<dbReference type="Pfam" id="PF00069">
    <property type="entry name" value="Pkinase"/>
    <property type="match status" value="1"/>
</dbReference>
<dbReference type="SMART" id="SM00365">
    <property type="entry name" value="LRR_SD22"/>
    <property type="match status" value="4"/>
</dbReference>
<dbReference type="SMART" id="SM00369">
    <property type="entry name" value="LRR_TYP"/>
    <property type="match status" value="13"/>
</dbReference>
<dbReference type="SMART" id="SM00220">
    <property type="entry name" value="S_TKc"/>
    <property type="match status" value="1"/>
</dbReference>
<dbReference type="SUPFAM" id="SSF52058">
    <property type="entry name" value="L domain-like"/>
    <property type="match status" value="1"/>
</dbReference>
<dbReference type="SUPFAM" id="SSF56112">
    <property type="entry name" value="Protein kinase-like (PK-like)"/>
    <property type="match status" value="1"/>
</dbReference>
<dbReference type="SUPFAM" id="SSF52047">
    <property type="entry name" value="RNI-like"/>
    <property type="match status" value="1"/>
</dbReference>
<dbReference type="PROSITE" id="PS50011">
    <property type="entry name" value="PROTEIN_KINASE_DOM"/>
    <property type="match status" value="1"/>
</dbReference>
<dbReference type="PROSITE" id="PS00108">
    <property type="entry name" value="PROTEIN_KINASE_ST"/>
    <property type="match status" value="1"/>
</dbReference>
<accession>Q9FL28</accession>
<accession>Q0WVN3</accession>
<accession>Q84WF4</accession>
<gene>
    <name evidence="32" type="primary">FLS2</name>
    <name evidence="35" type="ordered locus">At5g46330</name>
    <name evidence="36" type="ORF">MPL12.13</name>
    <name evidence="36" type="ORF">MPL12.8</name>
</gene>
<organism>
    <name type="scientific">Arabidopsis thaliana</name>
    <name type="common">Mouse-ear cress</name>
    <dbReference type="NCBI Taxonomy" id="3702"/>
    <lineage>
        <taxon>Eukaryota</taxon>
        <taxon>Viridiplantae</taxon>
        <taxon>Streptophyta</taxon>
        <taxon>Embryophyta</taxon>
        <taxon>Tracheophyta</taxon>
        <taxon>Spermatophyta</taxon>
        <taxon>Magnoliopsida</taxon>
        <taxon>eudicotyledons</taxon>
        <taxon>Gunneridae</taxon>
        <taxon>Pentapetalae</taxon>
        <taxon>rosids</taxon>
        <taxon>malvids</taxon>
        <taxon>Brassicales</taxon>
        <taxon>Brassicaceae</taxon>
        <taxon>Camelineae</taxon>
        <taxon>Arabidopsis</taxon>
    </lineage>
</organism>